<proteinExistence type="inferred from homology"/>
<organism>
    <name type="scientific">Cyanidium caldarium</name>
    <name type="common">Red alga</name>
    <dbReference type="NCBI Taxonomy" id="2771"/>
    <lineage>
        <taxon>Eukaryota</taxon>
        <taxon>Rhodophyta</taxon>
        <taxon>Bangiophyceae</taxon>
        <taxon>Cyanidiales</taxon>
        <taxon>Cyanidiaceae</taxon>
        <taxon>Cyanidium</taxon>
    </lineage>
</organism>
<dbReference type="EMBL" id="AF022186">
    <property type="protein sequence ID" value="AAB82699.1"/>
    <property type="molecule type" value="Genomic_DNA"/>
</dbReference>
<dbReference type="PIR" id="T11958">
    <property type="entry name" value="T11958"/>
</dbReference>
<dbReference type="RefSeq" id="NP_045062.1">
    <property type="nucleotide sequence ID" value="NC_001840.1"/>
</dbReference>
<dbReference type="SMR" id="O19890"/>
<dbReference type="GeneID" id="800261"/>
<dbReference type="GO" id="GO:0009507">
    <property type="term" value="C:chloroplast"/>
    <property type="evidence" value="ECO:0007669"/>
    <property type="project" value="UniProtKB-SubCell"/>
</dbReference>
<dbReference type="Gene3D" id="3.30.70.1860">
    <property type="entry name" value="Uncharacterised protein family Ycf54"/>
    <property type="match status" value="1"/>
</dbReference>
<dbReference type="InterPro" id="IPR019616">
    <property type="entry name" value="Ycf54"/>
</dbReference>
<dbReference type="InterPro" id="IPR038409">
    <property type="entry name" value="Ycf54-like_sf"/>
</dbReference>
<dbReference type="PANTHER" id="PTHR35319">
    <property type="match status" value="1"/>
</dbReference>
<dbReference type="PANTHER" id="PTHR35319:SF2">
    <property type="entry name" value="YCF54"/>
    <property type="match status" value="1"/>
</dbReference>
<dbReference type="Pfam" id="PF10674">
    <property type="entry name" value="Ycf54"/>
    <property type="match status" value="1"/>
</dbReference>
<evidence type="ECO:0000305" key="1"/>
<reference key="1">
    <citation type="journal article" date="2000" name="J. Mol. Evol.">
        <title>The structure and gene repertoire of an ancient red algal plastid genome.</title>
        <authorList>
            <person name="Gloeckner G."/>
            <person name="Rosenthal A."/>
            <person name="Valentin K.-U."/>
        </authorList>
    </citation>
    <scope>NUCLEOTIDE SEQUENCE [LARGE SCALE GENOMIC DNA]</scope>
    <source>
        <strain>RK-1</strain>
    </source>
</reference>
<geneLocation type="chloroplast"/>
<feature type="chain" id="PRO_0000217385" description="Uncharacterized protein ycf54">
    <location>
        <begin position="1"/>
        <end position="103"/>
    </location>
</feature>
<comment type="subcellular location">
    <subcellularLocation>
        <location>Plastid</location>
        <location>Chloroplast</location>
    </subcellularLocation>
</comment>
<comment type="similarity">
    <text evidence="1">Belongs to the ycf54 family.</text>
</comment>
<accession>O19890</accession>
<gene>
    <name type="primary">ycf54</name>
    <name type="synonym">ycf6</name>
</gene>
<sequence>MKADYNTYYYIAASKHFLTQEEPLEEILREKTEHFIANNKSIDFWIFDSTKLNAHSPNEIKTLQKTFFFPTILIISSNKKFITWLKLRLRYIFTDKIQLAIKL</sequence>
<name>YCF54_CYACA</name>
<protein>
    <recommendedName>
        <fullName>Uncharacterized protein ycf54</fullName>
    </recommendedName>
</protein>
<keyword id="KW-0150">Chloroplast</keyword>
<keyword id="KW-0934">Plastid</keyword>